<feature type="chain" id="PRO_0000354507" description="Large ribosomal subunit protein uL22">
    <location>
        <begin position="1"/>
        <end position="128"/>
    </location>
</feature>
<protein>
    <recommendedName>
        <fullName evidence="1">Large ribosomal subunit protein uL22</fullName>
    </recommendedName>
    <alternativeName>
        <fullName evidence="2">50S ribosomal protein L22</fullName>
    </alternativeName>
</protein>
<organism>
    <name type="scientific">Prochlorococcus marinus (strain MIT 9301)</name>
    <dbReference type="NCBI Taxonomy" id="167546"/>
    <lineage>
        <taxon>Bacteria</taxon>
        <taxon>Bacillati</taxon>
        <taxon>Cyanobacteriota</taxon>
        <taxon>Cyanophyceae</taxon>
        <taxon>Synechococcales</taxon>
        <taxon>Prochlorococcaceae</taxon>
        <taxon>Prochlorococcus</taxon>
    </lineage>
</organism>
<gene>
    <name evidence="1" type="primary">rplV</name>
    <name evidence="1" type="synonym">rpl22</name>
    <name type="ordered locus">P9301_17441</name>
</gene>
<evidence type="ECO:0000255" key="1">
    <source>
        <dbReference type="HAMAP-Rule" id="MF_01331"/>
    </source>
</evidence>
<evidence type="ECO:0000305" key="2"/>
<keyword id="KW-1185">Reference proteome</keyword>
<keyword id="KW-0687">Ribonucleoprotein</keyword>
<keyword id="KW-0689">Ribosomal protein</keyword>
<keyword id="KW-0694">RNA-binding</keyword>
<keyword id="KW-0699">rRNA-binding</keyword>
<sequence length="128" mass="14177">MTTTPETQKTAVAHGNYVRGSASKVRRVLDQIRGRSYRDALIMLEFMPYRSTDPITKVLRSAVANAEHNLGMDPSTLVISSAWANSGPVMKRYRPRAQGRAFSIKKQTCHISISVESAPTQTNAEVQN</sequence>
<proteinExistence type="inferred from homology"/>
<dbReference type="EMBL" id="CP000576">
    <property type="protein sequence ID" value="ABO18367.1"/>
    <property type="molecule type" value="Genomic_DNA"/>
</dbReference>
<dbReference type="RefSeq" id="WP_011863656.1">
    <property type="nucleotide sequence ID" value="NC_009091.1"/>
</dbReference>
<dbReference type="SMR" id="A3PF42"/>
<dbReference type="STRING" id="167546.P9301_17441"/>
<dbReference type="KEGG" id="pmg:P9301_17441"/>
<dbReference type="eggNOG" id="COG0091">
    <property type="taxonomic scope" value="Bacteria"/>
</dbReference>
<dbReference type="HOGENOM" id="CLU_083987_3_2_3"/>
<dbReference type="OrthoDB" id="9805969at2"/>
<dbReference type="Proteomes" id="UP000001430">
    <property type="component" value="Chromosome"/>
</dbReference>
<dbReference type="GO" id="GO:0022625">
    <property type="term" value="C:cytosolic large ribosomal subunit"/>
    <property type="evidence" value="ECO:0007669"/>
    <property type="project" value="TreeGrafter"/>
</dbReference>
<dbReference type="GO" id="GO:0019843">
    <property type="term" value="F:rRNA binding"/>
    <property type="evidence" value="ECO:0007669"/>
    <property type="project" value="UniProtKB-UniRule"/>
</dbReference>
<dbReference type="GO" id="GO:0003735">
    <property type="term" value="F:structural constituent of ribosome"/>
    <property type="evidence" value="ECO:0007669"/>
    <property type="project" value="InterPro"/>
</dbReference>
<dbReference type="GO" id="GO:0006412">
    <property type="term" value="P:translation"/>
    <property type="evidence" value="ECO:0007669"/>
    <property type="project" value="UniProtKB-UniRule"/>
</dbReference>
<dbReference type="CDD" id="cd00336">
    <property type="entry name" value="Ribosomal_L22"/>
    <property type="match status" value="1"/>
</dbReference>
<dbReference type="Gene3D" id="3.90.470.10">
    <property type="entry name" value="Ribosomal protein L22/L17"/>
    <property type="match status" value="1"/>
</dbReference>
<dbReference type="HAMAP" id="MF_01331_B">
    <property type="entry name" value="Ribosomal_uL22_B"/>
    <property type="match status" value="1"/>
</dbReference>
<dbReference type="InterPro" id="IPR001063">
    <property type="entry name" value="Ribosomal_uL22"/>
</dbReference>
<dbReference type="InterPro" id="IPR005727">
    <property type="entry name" value="Ribosomal_uL22_bac/chlpt-type"/>
</dbReference>
<dbReference type="InterPro" id="IPR047867">
    <property type="entry name" value="Ribosomal_uL22_bac/org-type"/>
</dbReference>
<dbReference type="InterPro" id="IPR018260">
    <property type="entry name" value="Ribosomal_uL22_CS"/>
</dbReference>
<dbReference type="InterPro" id="IPR036394">
    <property type="entry name" value="Ribosomal_uL22_sf"/>
</dbReference>
<dbReference type="NCBIfam" id="TIGR01044">
    <property type="entry name" value="rplV_bact"/>
    <property type="match status" value="1"/>
</dbReference>
<dbReference type="PANTHER" id="PTHR13501">
    <property type="entry name" value="CHLOROPLAST 50S RIBOSOMAL PROTEIN L22-RELATED"/>
    <property type="match status" value="1"/>
</dbReference>
<dbReference type="PANTHER" id="PTHR13501:SF8">
    <property type="entry name" value="LARGE RIBOSOMAL SUBUNIT PROTEIN UL22M"/>
    <property type="match status" value="1"/>
</dbReference>
<dbReference type="Pfam" id="PF00237">
    <property type="entry name" value="Ribosomal_L22"/>
    <property type="match status" value="1"/>
</dbReference>
<dbReference type="SUPFAM" id="SSF54843">
    <property type="entry name" value="Ribosomal protein L22"/>
    <property type="match status" value="1"/>
</dbReference>
<dbReference type="PROSITE" id="PS00464">
    <property type="entry name" value="RIBOSOMAL_L22"/>
    <property type="match status" value="1"/>
</dbReference>
<reference key="1">
    <citation type="journal article" date="2007" name="PLoS Genet.">
        <title>Patterns and implications of gene gain and loss in the evolution of Prochlorococcus.</title>
        <authorList>
            <person name="Kettler G.C."/>
            <person name="Martiny A.C."/>
            <person name="Huang K."/>
            <person name="Zucker J."/>
            <person name="Coleman M.L."/>
            <person name="Rodrigue S."/>
            <person name="Chen F."/>
            <person name="Lapidus A."/>
            <person name="Ferriera S."/>
            <person name="Johnson J."/>
            <person name="Steglich C."/>
            <person name="Church G.M."/>
            <person name="Richardson P."/>
            <person name="Chisholm S.W."/>
        </authorList>
    </citation>
    <scope>NUCLEOTIDE SEQUENCE [LARGE SCALE GENOMIC DNA]</scope>
    <source>
        <strain>MIT 9301</strain>
    </source>
</reference>
<accession>A3PF42</accession>
<name>RL22_PROM0</name>
<comment type="function">
    <text evidence="1">This protein binds specifically to 23S rRNA; its binding is stimulated by other ribosomal proteins, e.g. L4, L17, and L20. It is important during the early stages of 50S assembly. It makes multiple contacts with different domains of the 23S rRNA in the assembled 50S subunit and ribosome (By similarity).</text>
</comment>
<comment type="function">
    <text evidence="1">The globular domain of the protein is located near the polypeptide exit tunnel on the outside of the subunit, while an extended beta-hairpin is found that lines the wall of the exit tunnel in the center of the 70S ribosome.</text>
</comment>
<comment type="subunit">
    <text evidence="1">Part of the 50S ribosomal subunit.</text>
</comment>
<comment type="similarity">
    <text evidence="1">Belongs to the universal ribosomal protein uL22 family.</text>
</comment>